<proteinExistence type="inferred from homology"/>
<dbReference type="EC" id="1.14.-.-"/>
<dbReference type="EMBL" id="Z48717">
    <property type="protein sequence ID" value="CAA88606.1"/>
    <property type="molecule type" value="Genomic_DNA"/>
</dbReference>
<dbReference type="PIR" id="T24780">
    <property type="entry name" value="T24780"/>
</dbReference>
<dbReference type="RefSeq" id="NP_496110.1">
    <property type="nucleotide sequence ID" value="NM_063709.3"/>
</dbReference>
<dbReference type="SMR" id="Q27517"/>
<dbReference type="FunCoup" id="Q27517">
    <property type="interactions" value="85"/>
</dbReference>
<dbReference type="STRING" id="6239.T10B9.5.1"/>
<dbReference type="PaxDb" id="6239-T10B9.5"/>
<dbReference type="EnsemblMetazoa" id="T10B9.5.1">
    <property type="protein sequence ID" value="T10B9.5.1"/>
    <property type="gene ID" value="WBGene00011675"/>
</dbReference>
<dbReference type="GeneID" id="188359"/>
<dbReference type="KEGG" id="cel:CELE_T10B9.5"/>
<dbReference type="UCSC" id="T10B9.5">
    <property type="organism name" value="c. elegans"/>
</dbReference>
<dbReference type="AGR" id="WB:WBGene00011675"/>
<dbReference type="CTD" id="188359"/>
<dbReference type="WormBase" id="T10B9.5">
    <property type="protein sequence ID" value="CE01658"/>
    <property type="gene ID" value="WBGene00011675"/>
    <property type="gene designation" value="cyp-13A3"/>
</dbReference>
<dbReference type="eggNOG" id="KOG0158">
    <property type="taxonomic scope" value="Eukaryota"/>
</dbReference>
<dbReference type="GeneTree" id="ENSGT00970000195979"/>
<dbReference type="HOGENOM" id="CLU_001570_5_2_1"/>
<dbReference type="InParanoid" id="Q27517"/>
<dbReference type="OMA" id="RECNGES"/>
<dbReference type="OrthoDB" id="2789670at2759"/>
<dbReference type="PhylomeDB" id="Q27517"/>
<dbReference type="PRO" id="PR:Q27517"/>
<dbReference type="Proteomes" id="UP000001940">
    <property type="component" value="Chromosome II"/>
</dbReference>
<dbReference type="Bgee" id="WBGene00011675">
    <property type="expression patterns" value="Expressed in larva"/>
</dbReference>
<dbReference type="GO" id="GO:0020037">
    <property type="term" value="F:heme binding"/>
    <property type="evidence" value="ECO:0007669"/>
    <property type="project" value="InterPro"/>
</dbReference>
<dbReference type="GO" id="GO:0005506">
    <property type="term" value="F:iron ion binding"/>
    <property type="evidence" value="ECO:0007669"/>
    <property type="project" value="InterPro"/>
</dbReference>
<dbReference type="GO" id="GO:0004497">
    <property type="term" value="F:monooxygenase activity"/>
    <property type="evidence" value="ECO:0007669"/>
    <property type="project" value="UniProtKB-KW"/>
</dbReference>
<dbReference type="GO" id="GO:0016705">
    <property type="term" value="F:oxidoreductase activity, acting on paired donors, with incorporation or reduction of molecular oxygen"/>
    <property type="evidence" value="ECO:0007669"/>
    <property type="project" value="InterPro"/>
</dbReference>
<dbReference type="CDD" id="cd11055">
    <property type="entry name" value="CYP3A-like"/>
    <property type="match status" value="1"/>
</dbReference>
<dbReference type="FunFam" id="1.10.630.10:FF:000182">
    <property type="entry name" value="Cytochrome P450 3A4"/>
    <property type="match status" value="1"/>
</dbReference>
<dbReference type="Gene3D" id="1.10.630.10">
    <property type="entry name" value="Cytochrome P450"/>
    <property type="match status" value="1"/>
</dbReference>
<dbReference type="InterPro" id="IPR001128">
    <property type="entry name" value="Cyt_P450"/>
</dbReference>
<dbReference type="InterPro" id="IPR017972">
    <property type="entry name" value="Cyt_P450_CS"/>
</dbReference>
<dbReference type="InterPro" id="IPR002401">
    <property type="entry name" value="Cyt_P450_E_grp-I"/>
</dbReference>
<dbReference type="InterPro" id="IPR036396">
    <property type="entry name" value="Cyt_P450_sf"/>
</dbReference>
<dbReference type="InterPro" id="IPR050705">
    <property type="entry name" value="Cytochrome_P450_3A"/>
</dbReference>
<dbReference type="PANTHER" id="PTHR24302">
    <property type="entry name" value="CYTOCHROME P450 FAMILY 3"/>
    <property type="match status" value="1"/>
</dbReference>
<dbReference type="PANTHER" id="PTHR24302:SF15">
    <property type="entry name" value="FATTY-ACID PEROXYGENASE"/>
    <property type="match status" value="1"/>
</dbReference>
<dbReference type="Pfam" id="PF00067">
    <property type="entry name" value="p450"/>
    <property type="match status" value="1"/>
</dbReference>
<dbReference type="PRINTS" id="PR00463">
    <property type="entry name" value="EP450I"/>
</dbReference>
<dbReference type="PRINTS" id="PR00385">
    <property type="entry name" value="P450"/>
</dbReference>
<dbReference type="SUPFAM" id="SSF48264">
    <property type="entry name" value="Cytochrome P450"/>
    <property type="match status" value="1"/>
</dbReference>
<dbReference type="PROSITE" id="PS00086">
    <property type="entry name" value="CYTOCHROME_P450"/>
    <property type="match status" value="1"/>
</dbReference>
<gene>
    <name type="primary">cyp-13A3</name>
    <name type="synonym">cyp13a3</name>
    <name type="ORF">T10B9.5</name>
</gene>
<reference key="1">
    <citation type="journal article" date="1998" name="Science">
        <title>Genome sequence of the nematode C. elegans: a platform for investigating biology.</title>
        <authorList>
            <consortium name="The C. elegans sequencing consortium"/>
        </authorList>
    </citation>
    <scope>NUCLEOTIDE SEQUENCE [LARGE SCALE GENOMIC DNA]</scope>
    <source>
        <strain>Bristol N2</strain>
    </source>
</reference>
<keyword id="KW-0349">Heme</keyword>
<keyword id="KW-0408">Iron</keyword>
<keyword id="KW-0479">Metal-binding</keyword>
<keyword id="KW-0503">Monooxygenase</keyword>
<keyword id="KW-0560">Oxidoreductase</keyword>
<keyword id="KW-1185">Reference proteome</keyword>
<accession>Q27517</accession>
<organism>
    <name type="scientific">Caenorhabditis elegans</name>
    <dbReference type="NCBI Taxonomy" id="6239"/>
    <lineage>
        <taxon>Eukaryota</taxon>
        <taxon>Metazoa</taxon>
        <taxon>Ecdysozoa</taxon>
        <taxon>Nematoda</taxon>
        <taxon>Chromadorea</taxon>
        <taxon>Rhabditida</taxon>
        <taxon>Rhabditina</taxon>
        <taxon>Rhabditomorpha</taxon>
        <taxon>Rhabditoidea</taxon>
        <taxon>Rhabditidae</taxon>
        <taxon>Peloderinae</taxon>
        <taxon>Caenorhabditis</taxon>
    </lineage>
</organism>
<comment type="function">
    <text>Cytochromes P450 are a group of heme-thiolate monooxygenases. They oxidize a variety of structurally unrelated compounds, including steroids, fatty acids, and xenobiotics.</text>
</comment>
<comment type="cofactor">
    <cofactor evidence="1">
        <name>heme</name>
        <dbReference type="ChEBI" id="CHEBI:30413"/>
    </cofactor>
</comment>
<comment type="similarity">
    <text evidence="2">Belongs to the cytochrome P450 family.</text>
</comment>
<evidence type="ECO:0000250" key="1"/>
<evidence type="ECO:0000305" key="2"/>
<protein>
    <recommendedName>
        <fullName>Putative cytochrome P450 CYP13A3</fullName>
        <ecNumber>1.14.-.-</ecNumber>
    </recommendedName>
</protein>
<name>C13A3_CAEEL</name>
<sequence>MSLSILIAIALFIGVFTYYLWIWSFWMRKGIKGPRGLPFFGIINAFQSYEKPWILRLGDWTKEYGPMYGFTDGVEKTLVVSDPEFVHEVFVKQFDNFYARKQNPLQGDPDKDPRIHLVTSQGHRWKRLRTLASPTFSNKSLRKIFSTVEESVAEMMRHLEKGTAGGKTIDILEYYQEFTMDIIGKIAMGQSGSMMFENPWLDKIRAIFNTRGNIIFIICGIVPFTGSIFRWFFSKVPTAQTVTSLMHTLEIALTKRVEQRAADEKAGIESSGEPQDFIDLFLDVQADTDFLEDETKNGFARSQIVKVDKHLTFDEIIGQLFVFLLAGYDTTALSLSYSSYLLARHPEIQKKLQEEVDRECPDPEVTFDQLSKLKYMECVIKETLRLYPLASIVHNRKCMKSTTVLGMKIEEGTNVQADTWTLHYDPKFWGENANEFKPERWESGDEQAVAKGAYLPFGLGPRICIGMRLAYMEEKMLLAQILKKYSLETTFETHIPLKLVGIATTAPTNVHLKLKPRHSD</sequence>
<feature type="chain" id="PRO_0000052263" description="Putative cytochrome P450 CYP13A3">
    <location>
        <begin position="1"/>
        <end position="520"/>
    </location>
</feature>
<feature type="binding site" description="axial binding residue" evidence="1">
    <location>
        <position position="464"/>
    </location>
    <ligand>
        <name>heme</name>
        <dbReference type="ChEBI" id="CHEBI:30413"/>
    </ligand>
    <ligandPart>
        <name>Fe</name>
        <dbReference type="ChEBI" id="CHEBI:18248"/>
    </ligandPart>
</feature>